<evidence type="ECO:0000255" key="1">
    <source>
        <dbReference type="HAMAP-Rule" id="MF_00037"/>
    </source>
</evidence>
<reference key="1">
    <citation type="journal article" date="2007" name="Science">
        <title>Legumes symbioses: absence of nod genes in photosynthetic bradyrhizobia.</title>
        <authorList>
            <person name="Giraud E."/>
            <person name="Moulin L."/>
            <person name="Vallenet D."/>
            <person name="Barbe V."/>
            <person name="Cytryn E."/>
            <person name="Avarre J.-C."/>
            <person name="Jaubert M."/>
            <person name="Simon D."/>
            <person name="Cartieaux F."/>
            <person name="Prin Y."/>
            <person name="Bena G."/>
            <person name="Hannibal L."/>
            <person name="Fardoux J."/>
            <person name="Kojadinovic M."/>
            <person name="Vuillet L."/>
            <person name="Lajus A."/>
            <person name="Cruveiller S."/>
            <person name="Rouy Z."/>
            <person name="Mangenot S."/>
            <person name="Segurens B."/>
            <person name="Dossat C."/>
            <person name="Franck W.L."/>
            <person name="Chang W.-S."/>
            <person name="Saunders E."/>
            <person name="Bruce D."/>
            <person name="Richardson P."/>
            <person name="Normand P."/>
            <person name="Dreyfus B."/>
            <person name="Pignol D."/>
            <person name="Stacey G."/>
            <person name="Emerich D."/>
            <person name="Vermeglio A."/>
            <person name="Medigue C."/>
            <person name="Sadowsky M."/>
        </authorList>
    </citation>
    <scope>NUCLEOTIDE SEQUENCE [LARGE SCALE GENOMIC DNA]</scope>
    <source>
        <strain>ORS 278</strain>
    </source>
</reference>
<dbReference type="EC" id="1.3.1.98" evidence="1"/>
<dbReference type="EMBL" id="CU234118">
    <property type="protein sequence ID" value="CAL79327.1"/>
    <property type="molecule type" value="Genomic_DNA"/>
</dbReference>
<dbReference type="RefSeq" id="WP_012029234.1">
    <property type="nucleotide sequence ID" value="NC_009445.1"/>
</dbReference>
<dbReference type="SMR" id="A4YZK1"/>
<dbReference type="STRING" id="114615.BRADO5657"/>
<dbReference type="KEGG" id="bra:BRADO5657"/>
<dbReference type="eggNOG" id="COG0812">
    <property type="taxonomic scope" value="Bacteria"/>
</dbReference>
<dbReference type="HOGENOM" id="CLU_035304_1_0_5"/>
<dbReference type="OrthoDB" id="9804753at2"/>
<dbReference type="UniPathway" id="UPA00219"/>
<dbReference type="Proteomes" id="UP000001994">
    <property type="component" value="Chromosome"/>
</dbReference>
<dbReference type="GO" id="GO:0005829">
    <property type="term" value="C:cytosol"/>
    <property type="evidence" value="ECO:0007669"/>
    <property type="project" value="TreeGrafter"/>
</dbReference>
<dbReference type="GO" id="GO:0071949">
    <property type="term" value="F:FAD binding"/>
    <property type="evidence" value="ECO:0007669"/>
    <property type="project" value="InterPro"/>
</dbReference>
<dbReference type="GO" id="GO:0008762">
    <property type="term" value="F:UDP-N-acetylmuramate dehydrogenase activity"/>
    <property type="evidence" value="ECO:0007669"/>
    <property type="project" value="UniProtKB-UniRule"/>
</dbReference>
<dbReference type="GO" id="GO:0051301">
    <property type="term" value="P:cell division"/>
    <property type="evidence" value="ECO:0007669"/>
    <property type="project" value="UniProtKB-KW"/>
</dbReference>
<dbReference type="GO" id="GO:0071555">
    <property type="term" value="P:cell wall organization"/>
    <property type="evidence" value="ECO:0007669"/>
    <property type="project" value="UniProtKB-KW"/>
</dbReference>
<dbReference type="GO" id="GO:0009252">
    <property type="term" value="P:peptidoglycan biosynthetic process"/>
    <property type="evidence" value="ECO:0007669"/>
    <property type="project" value="UniProtKB-UniRule"/>
</dbReference>
<dbReference type="GO" id="GO:0008360">
    <property type="term" value="P:regulation of cell shape"/>
    <property type="evidence" value="ECO:0007669"/>
    <property type="project" value="UniProtKB-KW"/>
</dbReference>
<dbReference type="Gene3D" id="3.30.465.10">
    <property type="match status" value="1"/>
</dbReference>
<dbReference type="Gene3D" id="3.90.78.10">
    <property type="entry name" value="UDP-N-acetylenolpyruvoylglucosamine reductase, C-terminal domain"/>
    <property type="match status" value="1"/>
</dbReference>
<dbReference type="Gene3D" id="3.30.43.10">
    <property type="entry name" value="Uridine Diphospho-n-acetylenolpyruvylglucosamine Reductase, domain 2"/>
    <property type="match status" value="1"/>
</dbReference>
<dbReference type="HAMAP" id="MF_00037">
    <property type="entry name" value="MurB"/>
    <property type="match status" value="1"/>
</dbReference>
<dbReference type="InterPro" id="IPR016166">
    <property type="entry name" value="FAD-bd_PCMH"/>
</dbReference>
<dbReference type="InterPro" id="IPR036318">
    <property type="entry name" value="FAD-bd_PCMH-like_sf"/>
</dbReference>
<dbReference type="InterPro" id="IPR016167">
    <property type="entry name" value="FAD-bd_PCMH_sub1"/>
</dbReference>
<dbReference type="InterPro" id="IPR016169">
    <property type="entry name" value="FAD-bd_PCMH_sub2"/>
</dbReference>
<dbReference type="InterPro" id="IPR003170">
    <property type="entry name" value="MurB"/>
</dbReference>
<dbReference type="InterPro" id="IPR011601">
    <property type="entry name" value="MurB_C"/>
</dbReference>
<dbReference type="InterPro" id="IPR036635">
    <property type="entry name" value="MurB_C_sf"/>
</dbReference>
<dbReference type="InterPro" id="IPR006094">
    <property type="entry name" value="Oxid_FAD_bind_N"/>
</dbReference>
<dbReference type="NCBIfam" id="TIGR00179">
    <property type="entry name" value="murB"/>
    <property type="match status" value="1"/>
</dbReference>
<dbReference type="NCBIfam" id="NF010480">
    <property type="entry name" value="PRK13905.1"/>
    <property type="match status" value="1"/>
</dbReference>
<dbReference type="PANTHER" id="PTHR21071">
    <property type="entry name" value="UDP-N-ACETYLENOLPYRUVOYLGLUCOSAMINE REDUCTASE"/>
    <property type="match status" value="1"/>
</dbReference>
<dbReference type="PANTHER" id="PTHR21071:SF4">
    <property type="entry name" value="UDP-N-ACETYLENOLPYRUVOYLGLUCOSAMINE REDUCTASE"/>
    <property type="match status" value="1"/>
</dbReference>
<dbReference type="Pfam" id="PF01565">
    <property type="entry name" value="FAD_binding_4"/>
    <property type="match status" value="1"/>
</dbReference>
<dbReference type="Pfam" id="PF02873">
    <property type="entry name" value="MurB_C"/>
    <property type="match status" value="1"/>
</dbReference>
<dbReference type="SUPFAM" id="SSF56176">
    <property type="entry name" value="FAD-binding/transporter-associated domain-like"/>
    <property type="match status" value="1"/>
</dbReference>
<dbReference type="SUPFAM" id="SSF56194">
    <property type="entry name" value="Uridine diphospho-N-Acetylenolpyruvylglucosamine reductase, MurB, C-terminal domain"/>
    <property type="match status" value="1"/>
</dbReference>
<dbReference type="PROSITE" id="PS51387">
    <property type="entry name" value="FAD_PCMH"/>
    <property type="match status" value="1"/>
</dbReference>
<accession>A4YZK1</accession>
<keyword id="KW-0131">Cell cycle</keyword>
<keyword id="KW-0132">Cell division</keyword>
<keyword id="KW-0133">Cell shape</keyword>
<keyword id="KW-0961">Cell wall biogenesis/degradation</keyword>
<keyword id="KW-0963">Cytoplasm</keyword>
<keyword id="KW-0274">FAD</keyword>
<keyword id="KW-0285">Flavoprotein</keyword>
<keyword id="KW-0521">NADP</keyword>
<keyword id="KW-0560">Oxidoreductase</keyword>
<keyword id="KW-0573">Peptidoglycan synthesis</keyword>
<keyword id="KW-1185">Reference proteome</keyword>
<sequence>MSFPDITPDLKAAMPALRGRLLANESLAPLTWFRVGGPAQVLFTPADADDLAYFLKHLPAELPVYVIGVGSNMIVRDGGVPGVVIRLAPRAFGEVKAEGDIITAGTAARDKRVAEVAASADLAGLEFLFGIPGTIGGALRMNAGANGGETKDILVEATAIDRRGETHRLSNADMKFTYRASGTDAALIFTAVRFRGTPSEPAAIRARMAEVQAHRETAQPIREKTGGSTFKNPPGHSAWKLVDAAGCRGLKVGGAQVSEMHCNFLINTGNATADDIETLGETVRERVKASSGIELQWEIKRIGVKAS</sequence>
<protein>
    <recommendedName>
        <fullName evidence="1">UDP-N-acetylenolpyruvoylglucosamine reductase</fullName>
        <ecNumber evidence="1">1.3.1.98</ecNumber>
    </recommendedName>
    <alternativeName>
        <fullName evidence="1">UDP-N-acetylmuramate dehydrogenase</fullName>
    </alternativeName>
</protein>
<organism>
    <name type="scientific">Bradyrhizobium sp. (strain ORS 278)</name>
    <dbReference type="NCBI Taxonomy" id="114615"/>
    <lineage>
        <taxon>Bacteria</taxon>
        <taxon>Pseudomonadati</taxon>
        <taxon>Pseudomonadota</taxon>
        <taxon>Alphaproteobacteria</taxon>
        <taxon>Hyphomicrobiales</taxon>
        <taxon>Nitrobacteraceae</taxon>
        <taxon>Bradyrhizobium</taxon>
    </lineage>
</organism>
<comment type="function">
    <text evidence="1">Cell wall formation.</text>
</comment>
<comment type="catalytic activity">
    <reaction evidence="1">
        <text>UDP-N-acetyl-alpha-D-muramate + NADP(+) = UDP-N-acetyl-3-O-(1-carboxyvinyl)-alpha-D-glucosamine + NADPH + H(+)</text>
        <dbReference type="Rhea" id="RHEA:12248"/>
        <dbReference type="ChEBI" id="CHEBI:15378"/>
        <dbReference type="ChEBI" id="CHEBI:57783"/>
        <dbReference type="ChEBI" id="CHEBI:58349"/>
        <dbReference type="ChEBI" id="CHEBI:68483"/>
        <dbReference type="ChEBI" id="CHEBI:70757"/>
        <dbReference type="EC" id="1.3.1.98"/>
    </reaction>
</comment>
<comment type="cofactor">
    <cofactor evidence="1">
        <name>FAD</name>
        <dbReference type="ChEBI" id="CHEBI:57692"/>
    </cofactor>
</comment>
<comment type="pathway">
    <text evidence="1">Cell wall biogenesis; peptidoglycan biosynthesis.</text>
</comment>
<comment type="subcellular location">
    <subcellularLocation>
        <location evidence="1">Cytoplasm</location>
    </subcellularLocation>
</comment>
<comment type="similarity">
    <text evidence="1">Belongs to the MurB family.</text>
</comment>
<name>MURB_BRASO</name>
<proteinExistence type="inferred from homology"/>
<feature type="chain" id="PRO_1000002865" description="UDP-N-acetylenolpyruvoylglucosamine reductase">
    <location>
        <begin position="1"/>
        <end position="307"/>
    </location>
</feature>
<feature type="domain" description="FAD-binding PCMH-type" evidence="1">
    <location>
        <begin position="34"/>
        <end position="199"/>
    </location>
</feature>
<feature type="active site" evidence="1">
    <location>
        <position position="179"/>
    </location>
</feature>
<feature type="active site" description="Proton donor" evidence="1">
    <location>
        <position position="228"/>
    </location>
</feature>
<feature type="active site" evidence="1">
    <location>
        <position position="298"/>
    </location>
</feature>
<gene>
    <name evidence="1" type="primary">murB</name>
    <name type="ordered locus">BRADO5657</name>
</gene>